<gene>
    <name evidence="1" type="primary">yidC</name>
    <name type="ordered locus">BMEII0275</name>
</gene>
<reference key="1">
    <citation type="journal article" date="2002" name="Proc. Natl. Acad. Sci. U.S.A.">
        <title>The genome sequence of the facultative intracellular pathogen Brucella melitensis.</title>
        <authorList>
            <person name="DelVecchio V.G."/>
            <person name="Kapatral V."/>
            <person name="Redkar R.J."/>
            <person name="Patra G."/>
            <person name="Mujer C."/>
            <person name="Los T."/>
            <person name="Ivanova N."/>
            <person name="Anderson I."/>
            <person name="Bhattacharyya A."/>
            <person name="Lykidis A."/>
            <person name="Reznik G."/>
            <person name="Jablonski L."/>
            <person name="Larsen N."/>
            <person name="D'Souza M."/>
            <person name="Bernal A."/>
            <person name="Mazur M."/>
            <person name="Goltsman E."/>
            <person name="Selkov E."/>
            <person name="Elzer P.H."/>
            <person name="Hagius S."/>
            <person name="O'Callaghan D."/>
            <person name="Letesson J.-J."/>
            <person name="Haselkorn R."/>
            <person name="Kyrpides N.C."/>
            <person name="Overbeek R."/>
        </authorList>
    </citation>
    <scope>NUCLEOTIDE SEQUENCE [LARGE SCALE GENOMIC DNA]</scope>
    <source>
        <strain>ATCC 23456 / CCUG 17765 / NCTC 10094 / 16M</strain>
    </source>
</reference>
<dbReference type="EMBL" id="AE008918">
    <property type="protein sequence ID" value="AAL53516.1"/>
    <property type="status" value="ALT_INIT"/>
    <property type="molecule type" value="Genomic_DNA"/>
</dbReference>
<dbReference type="PIR" id="AI3543">
    <property type="entry name" value="AI3543"/>
</dbReference>
<dbReference type="RefSeq" id="WP_004682443.1">
    <property type="nucleotide sequence ID" value="NZ_GG703779.1"/>
</dbReference>
<dbReference type="SMR" id="Q8YDA3"/>
<dbReference type="GeneID" id="29596016"/>
<dbReference type="KEGG" id="bme:BMEII0275"/>
<dbReference type="KEGG" id="bmel:DK63_2967"/>
<dbReference type="PATRIC" id="fig|224914.52.peg.3113"/>
<dbReference type="eggNOG" id="COG0706">
    <property type="taxonomic scope" value="Bacteria"/>
</dbReference>
<dbReference type="PhylomeDB" id="Q8YDA3"/>
<dbReference type="Proteomes" id="UP000000419">
    <property type="component" value="Chromosome II"/>
</dbReference>
<dbReference type="GO" id="GO:0005886">
    <property type="term" value="C:plasma membrane"/>
    <property type="evidence" value="ECO:0007669"/>
    <property type="project" value="UniProtKB-SubCell"/>
</dbReference>
<dbReference type="GO" id="GO:0032977">
    <property type="term" value="F:membrane insertase activity"/>
    <property type="evidence" value="ECO:0007669"/>
    <property type="project" value="InterPro"/>
</dbReference>
<dbReference type="GO" id="GO:0051205">
    <property type="term" value="P:protein insertion into membrane"/>
    <property type="evidence" value="ECO:0007669"/>
    <property type="project" value="TreeGrafter"/>
</dbReference>
<dbReference type="GO" id="GO:0015031">
    <property type="term" value="P:protein transport"/>
    <property type="evidence" value="ECO:0007669"/>
    <property type="project" value="UniProtKB-KW"/>
</dbReference>
<dbReference type="CDD" id="cd20070">
    <property type="entry name" value="5TM_YidC_Alb3"/>
    <property type="match status" value="1"/>
</dbReference>
<dbReference type="CDD" id="cd19961">
    <property type="entry name" value="EcYidC-like_peri"/>
    <property type="match status" value="1"/>
</dbReference>
<dbReference type="Gene3D" id="2.70.98.90">
    <property type="match status" value="1"/>
</dbReference>
<dbReference type="HAMAP" id="MF_01810">
    <property type="entry name" value="YidC_type1"/>
    <property type="match status" value="1"/>
</dbReference>
<dbReference type="InterPro" id="IPR019998">
    <property type="entry name" value="Membr_insert_YidC"/>
</dbReference>
<dbReference type="InterPro" id="IPR028053">
    <property type="entry name" value="Membr_insert_YidC_N"/>
</dbReference>
<dbReference type="InterPro" id="IPR001708">
    <property type="entry name" value="YidC/ALB3/OXA1/COX18"/>
</dbReference>
<dbReference type="InterPro" id="IPR028055">
    <property type="entry name" value="YidC/Oxa/ALB_C"/>
</dbReference>
<dbReference type="InterPro" id="IPR047196">
    <property type="entry name" value="YidC_ALB_C"/>
</dbReference>
<dbReference type="InterPro" id="IPR038221">
    <property type="entry name" value="YidC_periplasmic_sf"/>
</dbReference>
<dbReference type="NCBIfam" id="NF002353">
    <property type="entry name" value="PRK01318.1-4"/>
    <property type="match status" value="1"/>
</dbReference>
<dbReference type="NCBIfam" id="TIGR03593">
    <property type="entry name" value="yidC_nterm"/>
    <property type="match status" value="1"/>
</dbReference>
<dbReference type="NCBIfam" id="TIGR03592">
    <property type="entry name" value="yidC_oxa1_cterm"/>
    <property type="match status" value="1"/>
</dbReference>
<dbReference type="PANTHER" id="PTHR12428:SF65">
    <property type="entry name" value="CYTOCHROME C OXIDASE ASSEMBLY PROTEIN COX18, MITOCHONDRIAL"/>
    <property type="match status" value="1"/>
</dbReference>
<dbReference type="PANTHER" id="PTHR12428">
    <property type="entry name" value="OXA1"/>
    <property type="match status" value="1"/>
</dbReference>
<dbReference type="Pfam" id="PF02096">
    <property type="entry name" value="60KD_IMP"/>
    <property type="match status" value="1"/>
</dbReference>
<dbReference type="Pfam" id="PF14849">
    <property type="entry name" value="YidC_periplas"/>
    <property type="match status" value="1"/>
</dbReference>
<dbReference type="PRINTS" id="PR00701">
    <property type="entry name" value="60KDINNERMP"/>
</dbReference>
<dbReference type="PRINTS" id="PR01900">
    <property type="entry name" value="YIDCPROTEIN"/>
</dbReference>
<name>YIDC_BRUME</name>
<feature type="chain" id="PRO_0000124694" description="Membrane protein insertase YidC">
    <location>
        <begin position="1"/>
        <end position="610"/>
    </location>
</feature>
<feature type="transmembrane region" description="Helical" evidence="1">
    <location>
        <begin position="7"/>
        <end position="27"/>
    </location>
</feature>
<feature type="transmembrane region" description="Helical" evidence="1">
    <location>
        <begin position="358"/>
        <end position="378"/>
    </location>
</feature>
<feature type="transmembrane region" description="Helical" evidence="1">
    <location>
        <begin position="387"/>
        <end position="407"/>
    </location>
</feature>
<feature type="transmembrane region" description="Helical" evidence="1">
    <location>
        <begin position="458"/>
        <end position="478"/>
    </location>
</feature>
<feature type="transmembrane region" description="Helical" evidence="1">
    <location>
        <begin position="510"/>
        <end position="530"/>
    </location>
</feature>
<feature type="transmembrane region" description="Helical" evidence="1">
    <location>
        <begin position="546"/>
        <end position="566"/>
    </location>
</feature>
<feature type="region of interest" description="Disordered" evidence="2">
    <location>
        <begin position="36"/>
        <end position="82"/>
    </location>
</feature>
<feature type="compositionally biased region" description="Low complexity" evidence="2">
    <location>
        <begin position="44"/>
        <end position="55"/>
    </location>
</feature>
<keyword id="KW-0997">Cell inner membrane</keyword>
<keyword id="KW-1003">Cell membrane</keyword>
<keyword id="KW-0143">Chaperone</keyword>
<keyword id="KW-0472">Membrane</keyword>
<keyword id="KW-0653">Protein transport</keyword>
<keyword id="KW-0812">Transmembrane</keyword>
<keyword id="KW-1133">Transmembrane helix</keyword>
<keyword id="KW-0813">Transport</keyword>
<accession>Q8YDA3</accession>
<comment type="function">
    <text evidence="1">Required for the insertion and/or proper folding and/or complex formation of integral membrane proteins into the membrane. Involved in integration of membrane proteins that insert both dependently and independently of the Sec translocase complex, as well as at least some lipoproteins. Aids folding of multispanning membrane proteins.</text>
</comment>
<comment type="subunit">
    <text evidence="1">Interacts with the Sec translocase complex via SecD. Specifically interacts with transmembrane segments of nascent integral membrane proteins during membrane integration.</text>
</comment>
<comment type="subcellular location">
    <subcellularLocation>
        <location evidence="1">Cell inner membrane</location>
        <topology evidence="1">Multi-pass membrane protein</topology>
    </subcellularLocation>
</comment>
<comment type="similarity">
    <text evidence="1">Belongs to the OXA1/ALB3/YidC family. Type 1 subfamily.</text>
</comment>
<comment type="sequence caution" evidence="3">
    <conflict type="erroneous initiation">
        <sequence resource="EMBL-CDS" id="AAL53516"/>
    </conflict>
    <text>Truncated N-terminus.</text>
</comment>
<proteinExistence type="inferred from homology"/>
<organism>
    <name type="scientific">Brucella melitensis biotype 1 (strain ATCC 23456 / CCUG 17765 / NCTC 10094 / 16M)</name>
    <dbReference type="NCBI Taxonomy" id="224914"/>
    <lineage>
        <taxon>Bacteria</taxon>
        <taxon>Pseudomonadati</taxon>
        <taxon>Pseudomonadota</taxon>
        <taxon>Alphaproteobacteria</taxon>
        <taxon>Hyphomicrobiales</taxon>
        <taxon>Brucellaceae</taxon>
        <taxon>Brucella/Ochrobactrum group</taxon>
        <taxon>Brucella</taxon>
    </lineage>
</organism>
<sequence length="610" mass="69051">MENKRNFFITIALSILILALWQVFYLGPKTEAQREQARIEEQQRQAQQAAQNRQASSSTGDTPQMPANPDSIPGQGDTKAAGAPLTRDAAIAQSPRIEIDTPSLRGSINLTGARLDDLYLKKYHETVSDKSPEIELLAPSSLKQGYFVELGFTGNDATGAVPGPNTVWVVEGNNKLTPSTPVTLTYTNDKNLTFKRVISVDDAYMFTVDDTIINNGGSTVSLASYGRVTRFNQPEHASATYVLHEGLIGVMGQDGLQEIKYAKIEDNKDISFKDVIGGWVGITDKYWAATLIPPQDEKFTGRFSHFTNDRPRYQSDLLSAPLTVAPGQSQKIQNRVFAGAKVVNTIQNYETKYHIKQFDLLIDWGWFYFITKPMFYLIDWIYKFTGNFGVAILVVTVLLKALFFPLANKSYKSMARMKLMQPKMTEIREKYADDKMKQQQAMMELYKREKINPLAGCWPVLVQIPVFFALYKVLYVTIEMRHAPFFGWIQDLAAPDPTSIFNLFGLLPYTVPHFLMIGVWPIIMGIIMFLQMRMNPTPPDPTQAAIFTWMPIIFTFMLASFPAGLVIYWAWNNTLSIIQQSVIMKRQGVKIELFDNLKGLFRRKPKEANK</sequence>
<protein>
    <recommendedName>
        <fullName evidence="1">Membrane protein insertase YidC</fullName>
    </recommendedName>
    <alternativeName>
        <fullName evidence="1">Foldase YidC</fullName>
    </alternativeName>
    <alternativeName>
        <fullName evidence="1">Membrane integrase YidC</fullName>
    </alternativeName>
    <alternativeName>
        <fullName evidence="1">Membrane protein YidC</fullName>
    </alternativeName>
</protein>
<evidence type="ECO:0000255" key="1">
    <source>
        <dbReference type="HAMAP-Rule" id="MF_01810"/>
    </source>
</evidence>
<evidence type="ECO:0000256" key="2">
    <source>
        <dbReference type="SAM" id="MobiDB-lite"/>
    </source>
</evidence>
<evidence type="ECO:0000305" key="3"/>